<sequence length="131" mass="14275">MAEKVIYRGTGRRKTSVAQVILTPGKGNIIVNGVPALEFFPYPTLVQDLEQPLVATGTEKDFDITVTVKGGGFTGQAGATRLGIARALLVASEDYRKGLRAVGLLTRDARIKERKKYGLRGARRAPQYSKR</sequence>
<keyword id="KW-1185">Reference proteome</keyword>
<keyword id="KW-0687">Ribonucleoprotein</keyword>
<keyword id="KW-0689">Ribosomal protein</keyword>
<dbReference type="EMBL" id="AE017263">
    <property type="protein sequence ID" value="AAT75850.1"/>
    <property type="molecule type" value="Genomic_DNA"/>
</dbReference>
<dbReference type="RefSeq" id="WP_011183390.1">
    <property type="nucleotide sequence ID" value="NC_006055.1"/>
</dbReference>
<dbReference type="RefSeq" id="YP_053734.1">
    <property type="nucleotide sequence ID" value="NC_006055.1"/>
</dbReference>
<dbReference type="SMR" id="Q6F0X3"/>
<dbReference type="STRING" id="265311.Mfl492"/>
<dbReference type="PaxDb" id="265311-Mfl492"/>
<dbReference type="EnsemblBacteria" id="AAT75850">
    <property type="protein sequence ID" value="AAT75850"/>
    <property type="gene ID" value="Mfl492"/>
</dbReference>
<dbReference type="GeneID" id="2897884"/>
<dbReference type="KEGG" id="mfl:Mfl492"/>
<dbReference type="PATRIC" id="fig|265311.5.peg.498"/>
<dbReference type="eggNOG" id="COG0103">
    <property type="taxonomic scope" value="Bacteria"/>
</dbReference>
<dbReference type="HOGENOM" id="CLU_046483_2_1_14"/>
<dbReference type="OrthoDB" id="9803965at2"/>
<dbReference type="Proteomes" id="UP000006647">
    <property type="component" value="Chromosome"/>
</dbReference>
<dbReference type="GO" id="GO:0022627">
    <property type="term" value="C:cytosolic small ribosomal subunit"/>
    <property type="evidence" value="ECO:0007669"/>
    <property type="project" value="TreeGrafter"/>
</dbReference>
<dbReference type="GO" id="GO:0003723">
    <property type="term" value="F:RNA binding"/>
    <property type="evidence" value="ECO:0007669"/>
    <property type="project" value="TreeGrafter"/>
</dbReference>
<dbReference type="GO" id="GO:0003735">
    <property type="term" value="F:structural constituent of ribosome"/>
    <property type="evidence" value="ECO:0007669"/>
    <property type="project" value="InterPro"/>
</dbReference>
<dbReference type="GO" id="GO:0006412">
    <property type="term" value="P:translation"/>
    <property type="evidence" value="ECO:0007669"/>
    <property type="project" value="UniProtKB-UniRule"/>
</dbReference>
<dbReference type="FunFam" id="3.30.230.10:FF:000001">
    <property type="entry name" value="30S ribosomal protein S9"/>
    <property type="match status" value="1"/>
</dbReference>
<dbReference type="Gene3D" id="3.30.230.10">
    <property type="match status" value="1"/>
</dbReference>
<dbReference type="HAMAP" id="MF_00532_B">
    <property type="entry name" value="Ribosomal_uS9_B"/>
    <property type="match status" value="1"/>
</dbReference>
<dbReference type="InterPro" id="IPR020568">
    <property type="entry name" value="Ribosomal_Su5_D2-typ_SF"/>
</dbReference>
<dbReference type="InterPro" id="IPR000754">
    <property type="entry name" value="Ribosomal_uS9"/>
</dbReference>
<dbReference type="InterPro" id="IPR023035">
    <property type="entry name" value="Ribosomal_uS9_bac/plastid"/>
</dbReference>
<dbReference type="InterPro" id="IPR020574">
    <property type="entry name" value="Ribosomal_uS9_CS"/>
</dbReference>
<dbReference type="InterPro" id="IPR014721">
    <property type="entry name" value="Ribsml_uS5_D2-typ_fold_subgr"/>
</dbReference>
<dbReference type="NCBIfam" id="NF001099">
    <property type="entry name" value="PRK00132.1"/>
    <property type="match status" value="1"/>
</dbReference>
<dbReference type="PANTHER" id="PTHR21569">
    <property type="entry name" value="RIBOSOMAL PROTEIN S9"/>
    <property type="match status" value="1"/>
</dbReference>
<dbReference type="PANTHER" id="PTHR21569:SF1">
    <property type="entry name" value="SMALL RIBOSOMAL SUBUNIT PROTEIN US9M"/>
    <property type="match status" value="1"/>
</dbReference>
<dbReference type="Pfam" id="PF00380">
    <property type="entry name" value="Ribosomal_S9"/>
    <property type="match status" value="1"/>
</dbReference>
<dbReference type="SUPFAM" id="SSF54211">
    <property type="entry name" value="Ribosomal protein S5 domain 2-like"/>
    <property type="match status" value="1"/>
</dbReference>
<dbReference type="PROSITE" id="PS00360">
    <property type="entry name" value="RIBOSOMAL_S9"/>
    <property type="match status" value="1"/>
</dbReference>
<accession>Q6F0X3</accession>
<name>RS9_MESFL</name>
<reference key="1">
    <citation type="submission" date="2004-06" db="EMBL/GenBank/DDBJ databases">
        <authorList>
            <person name="Birren B.W."/>
            <person name="Stange-Thomann N."/>
            <person name="Hafez N."/>
            <person name="DeCaprio D."/>
            <person name="Fisher S."/>
            <person name="Butler J."/>
            <person name="Elkins T."/>
            <person name="Kodira C.D."/>
            <person name="Major J."/>
            <person name="Wang S."/>
            <person name="Nicol R."/>
            <person name="Nusbaum C."/>
        </authorList>
    </citation>
    <scope>NUCLEOTIDE SEQUENCE [LARGE SCALE GENOMIC DNA]</scope>
    <source>
        <strain>ATCC 33453 / NBRC 100688 / NCTC 11704 / L1</strain>
    </source>
</reference>
<feature type="chain" id="PRO_1000061004" description="Small ribosomal subunit protein uS9">
    <location>
        <begin position="1"/>
        <end position="131"/>
    </location>
</feature>
<organism>
    <name type="scientific">Mesoplasma florum (strain ATCC 33453 / NBRC 100688 / NCTC 11704 / L1)</name>
    <name type="common">Acholeplasma florum</name>
    <dbReference type="NCBI Taxonomy" id="265311"/>
    <lineage>
        <taxon>Bacteria</taxon>
        <taxon>Bacillati</taxon>
        <taxon>Mycoplasmatota</taxon>
        <taxon>Mollicutes</taxon>
        <taxon>Entomoplasmatales</taxon>
        <taxon>Entomoplasmataceae</taxon>
        <taxon>Mesoplasma</taxon>
    </lineage>
</organism>
<gene>
    <name evidence="1" type="primary">rpsI</name>
    <name type="ordered locus">Mfl492</name>
</gene>
<evidence type="ECO:0000255" key="1">
    <source>
        <dbReference type="HAMAP-Rule" id="MF_00532"/>
    </source>
</evidence>
<evidence type="ECO:0000305" key="2"/>
<proteinExistence type="inferred from homology"/>
<comment type="similarity">
    <text evidence="1">Belongs to the universal ribosomal protein uS9 family.</text>
</comment>
<protein>
    <recommendedName>
        <fullName evidence="1">Small ribosomal subunit protein uS9</fullName>
    </recommendedName>
    <alternativeName>
        <fullName evidence="2">30S ribosomal protein S9</fullName>
    </alternativeName>
</protein>